<sequence length="552" mass="60709">MYDYIIVGAGSAGCVLANRLSADPSKRVCLLEAGPRDTNPLIHMPLGIALLSNSKKLNWAFQTAPQQHLNERSLFWPRGKTLGGSSSINAMVYIRGHEEDYQAWEQAGGEYWGWKRAFALFKKLEHNQRFDKSNYHGTDGELAVSDLKDLNPLSKSFVQAGMEAKISFNGDFNGAHQEGVGFYQVTQKHGQRWSSARAFLHDVIDRPNLDIITEAHATKVLFEDRKAVGVSYIQKNMHQQVKTTDSGEVILSLGAVNTPQLLMLSGVGAAAELKEHGIALVHDLPEVGKNLQDHLDITLMCAANSRTPIGVAFSFIPRGLVGLFSYIFKRKGFLTSNVAESGGFVKSSPERDRPNLQFHFLPTYLKDHGRKIAVGYGYTLHICDLLPKSRGRIGLKSANPMDDPLIDPNYLSDPEDIKTMIAGIKIGRAIFDAPSMAKHFKREIVPGPAVTSDDEIVADIRSRAETIYHPVGTCRMGKDPASVVDPCLQVRGLRNIRVVDASIMPNLVAGNTNAPTIMIAENAAEIIVRKVDMASLDASIGFTRQNLEPELL</sequence>
<feature type="chain" id="PRO_0000205579" description="Alcohol dehydrogenase [acceptor]">
    <location>
        <begin position="1"/>
        <end position="552"/>
    </location>
</feature>
<feature type="active site" description="Proton acceptor" evidence="2">
    <location>
        <position position="469"/>
    </location>
</feature>
<feature type="binding site" evidence="3">
    <location>
        <begin position="3"/>
        <end position="32"/>
    </location>
    <ligand>
        <name>FAD</name>
        <dbReference type="ChEBI" id="CHEBI:57692"/>
    </ligand>
</feature>
<reference key="1">
    <citation type="journal article" date="2001" name="Microbiology">
        <title>Analysis of Pseudomonas putida alkane degradation gene clusters and flanking insertion sequences: evolution and regulation of the alk-genes.</title>
        <authorList>
            <person name="Van Beilen J.B."/>
            <person name="Panke S."/>
            <person name="Lucchini S."/>
            <person name="Franchini A.G."/>
            <person name="Roethlisberger M."/>
            <person name="Witholt B."/>
        </authorList>
    </citation>
    <scope>NUCLEOTIDE SEQUENCE [GENOMIC DNA]</scope>
    <source>
        <strain>P1</strain>
    </source>
</reference>
<organism>
    <name type="scientific">Pseudomonas putida</name>
    <name type="common">Arthrobacter siderocapsulatus</name>
    <dbReference type="NCBI Taxonomy" id="303"/>
    <lineage>
        <taxon>Bacteria</taxon>
        <taxon>Pseudomonadati</taxon>
        <taxon>Pseudomonadota</taxon>
        <taxon>Gammaproteobacteria</taxon>
        <taxon>Pseudomonadales</taxon>
        <taxon>Pseudomonadaceae</taxon>
        <taxon>Pseudomonas</taxon>
    </lineage>
</organism>
<keyword id="KW-0997">Cell inner membrane</keyword>
<keyword id="KW-1003">Cell membrane</keyword>
<keyword id="KW-0274">FAD</keyword>
<keyword id="KW-0285">Flavoprotein</keyword>
<keyword id="KW-0472">Membrane</keyword>
<keyword id="KW-0560">Oxidoreductase</keyword>
<dbReference type="EC" id="1.1.99.-"/>
<dbReference type="EMBL" id="AJ233397">
    <property type="protein sequence ID" value="CAB51051.1"/>
    <property type="molecule type" value="Genomic_DNA"/>
</dbReference>
<dbReference type="SMR" id="Q9WWW2"/>
<dbReference type="GO" id="GO:0005886">
    <property type="term" value="C:plasma membrane"/>
    <property type="evidence" value="ECO:0007669"/>
    <property type="project" value="UniProtKB-SubCell"/>
</dbReference>
<dbReference type="GO" id="GO:0047645">
    <property type="term" value="F:alkan-1-ol dehydrogenase (acceptor) activity"/>
    <property type="evidence" value="ECO:0007669"/>
    <property type="project" value="RHEA"/>
</dbReference>
<dbReference type="GO" id="GO:0050660">
    <property type="term" value="F:flavin adenine dinucleotide binding"/>
    <property type="evidence" value="ECO:0007669"/>
    <property type="project" value="InterPro"/>
</dbReference>
<dbReference type="Gene3D" id="3.50.50.60">
    <property type="entry name" value="FAD/NAD(P)-binding domain"/>
    <property type="match status" value="1"/>
</dbReference>
<dbReference type="Gene3D" id="3.30.560.10">
    <property type="entry name" value="Glucose Oxidase, domain 3"/>
    <property type="match status" value="1"/>
</dbReference>
<dbReference type="InterPro" id="IPR036188">
    <property type="entry name" value="FAD/NAD-bd_sf"/>
</dbReference>
<dbReference type="InterPro" id="IPR012132">
    <property type="entry name" value="GMC_OxRdtase"/>
</dbReference>
<dbReference type="InterPro" id="IPR000172">
    <property type="entry name" value="GMC_OxRdtase_N"/>
</dbReference>
<dbReference type="InterPro" id="IPR007867">
    <property type="entry name" value="GMC_OxRtase_C"/>
</dbReference>
<dbReference type="NCBIfam" id="NF002550">
    <property type="entry name" value="PRK02106.1"/>
    <property type="match status" value="1"/>
</dbReference>
<dbReference type="PANTHER" id="PTHR11552:SF147">
    <property type="entry name" value="CHOLINE DEHYDROGENASE, MITOCHONDRIAL"/>
    <property type="match status" value="1"/>
</dbReference>
<dbReference type="PANTHER" id="PTHR11552">
    <property type="entry name" value="GLUCOSE-METHANOL-CHOLINE GMC OXIDOREDUCTASE"/>
    <property type="match status" value="1"/>
</dbReference>
<dbReference type="Pfam" id="PF05199">
    <property type="entry name" value="GMC_oxred_C"/>
    <property type="match status" value="1"/>
</dbReference>
<dbReference type="Pfam" id="PF00732">
    <property type="entry name" value="GMC_oxred_N"/>
    <property type="match status" value="1"/>
</dbReference>
<dbReference type="PIRSF" id="PIRSF000137">
    <property type="entry name" value="Alcohol_oxidase"/>
    <property type="match status" value="1"/>
</dbReference>
<dbReference type="SUPFAM" id="SSF54373">
    <property type="entry name" value="FAD-linked reductases, C-terminal domain"/>
    <property type="match status" value="1"/>
</dbReference>
<dbReference type="SUPFAM" id="SSF51905">
    <property type="entry name" value="FAD/NAD(P)-binding domain"/>
    <property type="match status" value="1"/>
</dbReference>
<dbReference type="PROSITE" id="PS00623">
    <property type="entry name" value="GMC_OXRED_1"/>
    <property type="match status" value="1"/>
</dbReference>
<dbReference type="PROSITE" id="PS00624">
    <property type="entry name" value="GMC_OXRED_2"/>
    <property type="match status" value="1"/>
</dbReference>
<evidence type="ECO:0000250" key="1"/>
<evidence type="ECO:0000250" key="2">
    <source>
        <dbReference type="UniProtKB" id="E4QP00"/>
    </source>
</evidence>
<evidence type="ECO:0000255" key="3"/>
<evidence type="ECO:0000305" key="4"/>
<protein>
    <recommendedName>
        <fullName>Alcohol dehydrogenase [acceptor]</fullName>
        <ecNumber>1.1.99.-</ecNumber>
    </recommendedName>
</protein>
<accession>Q9WWW2</accession>
<proteinExistence type="inferred from homology"/>
<gene>
    <name type="primary">alkJ</name>
</gene>
<comment type="function">
    <text>Converts aliphatic medium-chain-length alcohols into aldehydes. May be linked to the electron transfer chain.</text>
</comment>
<comment type="catalytic activity">
    <reaction>
        <text>a primary alcohol + A = an aldehyde + AH2</text>
        <dbReference type="Rhea" id="RHEA:14685"/>
        <dbReference type="ChEBI" id="CHEBI:13193"/>
        <dbReference type="ChEBI" id="CHEBI:15734"/>
        <dbReference type="ChEBI" id="CHEBI:17478"/>
        <dbReference type="ChEBI" id="CHEBI:17499"/>
    </reaction>
</comment>
<comment type="cofactor">
    <cofactor evidence="1">
        <name>FAD</name>
        <dbReference type="ChEBI" id="CHEBI:57692"/>
    </cofactor>
</comment>
<comment type="subcellular location">
    <subcellularLocation>
        <location evidence="1">Cell inner membrane</location>
    </subcellularLocation>
</comment>
<comment type="similarity">
    <text evidence="4">Belongs to the GMC oxidoreductase family.</text>
</comment>
<name>ALKJ_PSEPU</name>